<accession>Q46J56</accession>
<feature type="chain" id="PRO_0000371069" description="ATP synthase subunit delta">
    <location>
        <begin position="1"/>
        <end position="182"/>
    </location>
</feature>
<sequence>MPLLNTVTTPYAEAFLQVAESRNEVDEVVTQAKSILELWNSCPEFSDAMSSPVLEVNQKKAALEKLFSSQVTPSFLNLLKLLADRQRIGLLNSVLERLLEIYREQRNIALATITSASALNEDQQSELLKKVQSIAGTDNLEIDLKVDSELLGGFVVNVGSKVIDASIAGQVRRLGLALAKVS</sequence>
<comment type="function">
    <text evidence="1">F(1)F(0) ATP synthase produces ATP from ADP in the presence of a proton or sodium gradient. F-type ATPases consist of two structural domains, F(1) containing the extramembraneous catalytic core and F(0) containing the membrane proton channel, linked together by a central stalk and a peripheral stalk. During catalysis, ATP synthesis in the catalytic domain of F(1) is coupled via a rotary mechanism of the central stalk subunits to proton translocation.</text>
</comment>
<comment type="function">
    <text evidence="1">This protein is part of the stalk that links CF(0) to CF(1). It either transmits conformational changes from CF(0) to CF(1) or is implicated in proton conduction.</text>
</comment>
<comment type="subunit">
    <text evidence="1">F-type ATPases have 2 components, F(1) - the catalytic core - and F(0) - the membrane proton channel. F(1) has five subunits: alpha(3), beta(3), gamma(1), delta(1), epsilon(1). CF(0) has four main subunits: a(1), b(1), b'(1) and c(10-14). The alpha and beta chains form an alternating ring which encloses part of the gamma chain. F(1) is attached to F(0) by a central stalk formed by the gamma and epsilon chains, while a peripheral stalk is formed by the delta, b and b' chains.</text>
</comment>
<comment type="subcellular location">
    <subcellularLocation>
        <location evidence="1">Cellular thylakoid membrane</location>
        <topology evidence="1">Peripheral membrane protein</topology>
    </subcellularLocation>
</comment>
<comment type="similarity">
    <text evidence="1">Belongs to the ATPase delta chain family.</text>
</comment>
<organism>
    <name type="scientific">Prochlorococcus marinus (strain NATL2A)</name>
    <dbReference type="NCBI Taxonomy" id="59920"/>
    <lineage>
        <taxon>Bacteria</taxon>
        <taxon>Bacillati</taxon>
        <taxon>Cyanobacteriota</taxon>
        <taxon>Cyanophyceae</taxon>
        <taxon>Synechococcales</taxon>
        <taxon>Prochlorococcaceae</taxon>
        <taxon>Prochlorococcus</taxon>
    </lineage>
</organism>
<keyword id="KW-0066">ATP synthesis</keyword>
<keyword id="KW-0139">CF(1)</keyword>
<keyword id="KW-0375">Hydrogen ion transport</keyword>
<keyword id="KW-0406">Ion transport</keyword>
<keyword id="KW-0472">Membrane</keyword>
<keyword id="KW-1185">Reference proteome</keyword>
<keyword id="KW-0793">Thylakoid</keyword>
<keyword id="KW-0813">Transport</keyword>
<proteinExistence type="inferred from homology"/>
<name>ATPD_PROMT</name>
<dbReference type="EMBL" id="CP000095">
    <property type="protein sequence ID" value="AAZ58472.1"/>
    <property type="molecule type" value="Genomic_DNA"/>
</dbReference>
<dbReference type="RefSeq" id="WP_011295328.1">
    <property type="nucleotide sequence ID" value="NC_007335.2"/>
</dbReference>
<dbReference type="SMR" id="Q46J56"/>
<dbReference type="STRING" id="59920.PMN2A_0982"/>
<dbReference type="KEGG" id="pmn:PMN2A_0982"/>
<dbReference type="HOGENOM" id="CLU_085114_4_1_3"/>
<dbReference type="OrthoDB" id="9802471at2"/>
<dbReference type="PhylomeDB" id="Q46J56"/>
<dbReference type="Proteomes" id="UP000002535">
    <property type="component" value="Chromosome"/>
</dbReference>
<dbReference type="GO" id="GO:0031676">
    <property type="term" value="C:plasma membrane-derived thylakoid membrane"/>
    <property type="evidence" value="ECO:0007669"/>
    <property type="project" value="UniProtKB-SubCell"/>
</dbReference>
<dbReference type="GO" id="GO:0045259">
    <property type="term" value="C:proton-transporting ATP synthase complex"/>
    <property type="evidence" value="ECO:0007669"/>
    <property type="project" value="UniProtKB-KW"/>
</dbReference>
<dbReference type="GO" id="GO:0046933">
    <property type="term" value="F:proton-transporting ATP synthase activity, rotational mechanism"/>
    <property type="evidence" value="ECO:0007669"/>
    <property type="project" value="UniProtKB-UniRule"/>
</dbReference>
<dbReference type="Gene3D" id="1.10.520.20">
    <property type="entry name" value="N-terminal domain of the delta subunit of the F1F0-ATP synthase"/>
    <property type="match status" value="1"/>
</dbReference>
<dbReference type="HAMAP" id="MF_01416">
    <property type="entry name" value="ATP_synth_delta_bact"/>
    <property type="match status" value="1"/>
</dbReference>
<dbReference type="InterPro" id="IPR026015">
    <property type="entry name" value="ATP_synth_OSCP/delta_N_sf"/>
</dbReference>
<dbReference type="InterPro" id="IPR020781">
    <property type="entry name" value="ATPase_OSCP/d_CS"/>
</dbReference>
<dbReference type="InterPro" id="IPR000711">
    <property type="entry name" value="ATPase_OSCP/dsu"/>
</dbReference>
<dbReference type="NCBIfam" id="TIGR01145">
    <property type="entry name" value="ATP_synt_delta"/>
    <property type="match status" value="1"/>
</dbReference>
<dbReference type="PANTHER" id="PTHR11910">
    <property type="entry name" value="ATP SYNTHASE DELTA CHAIN"/>
    <property type="match status" value="1"/>
</dbReference>
<dbReference type="Pfam" id="PF00213">
    <property type="entry name" value="OSCP"/>
    <property type="match status" value="1"/>
</dbReference>
<dbReference type="PRINTS" id="PR00125">
    <property type="entry name" value="ATPASEDELTA"/>
</dbReference>
<dbReference type="SUPFAM" id="SSF47928">
    <property type="entry name" value="N-terminal domain of the delta subunit of the F1F0-ATP synthase"/>
    <property type="match status" value="1"/>
</dbReference>
<dbReference type="PROSITE" id="PS00389">
    <property type="entry name" value="ATPASE_DELTA"/>
    <property type="match status" value="1"/>
</dbReference>
<reference key="1">
    <citation type="journal article" date="2007" name="PLoS Genet.">
        <title>Patterns and implications of gene gain and loss in the evolution of Prochlorococcus.</title>
        <authorList>
            <person name="Kettler G.C."/>
            <person name="Martiny A.C."/>
            <person name="Huang K."/>
            <person name="Zucker J."/>
            <person name="Coleman M.L."/>
            <person name="Rodrigue S."/>
            <person name="Chen F."/>
            <person name="Lapidus A."/>
            <person name="Ferriera S."/>
            <person name="Johnson J."/>
            <person name="Steglich C."/>
            <person name="Church G.M."/>
            <person name="Richardson P."/>
            <person name="Chisholm S.W."/>
        </authorList>
    </citation>
    <scope>NUCLEOTIDE SEQUENCE [LARGE SCALE GENOMIC DNA]</scope>
    <source>
        <strain>NATL2A</strain>
    </source>
</reference>
<protein>
    <recommendedName>
        <fullName evidence="1">ATP synthase subunit delta</fullName>
    </recommendedName>
    <alternativeName>
        <fullName evidence="1">ATP synthase F(1) sector subunit delta</fullName>
    </alternativeName>
    <alternativeName>
        <fullName evidence="1">F-type ATPase subunit delta</fullName>
        <shortName evidence="1">F-ATPase subunit delta</shortName>
    </alternativeName>
</protein>
<gene>
    <name evidence="1" type="primary">atpH</name>
    <name evidence="1" type="synonym">atpD</name>
    <name type="ordered locus">PMN2A_0982</name>
</gene>
<evidence type="ECO:0000255" key="1">
    <source>
        <dbReference type="HAMAP-Rule" id="MF_01416"/>
    </source>
</evidence>